<accession>Q9HQJ1</accession>
<organism>
    <name type="scientific">Halobacterium salinarum (strain ATCC 700922 / JCM 11081 / NRC-1)</name>
    <name type="common">Halobacterium halobium</name>
    <dbReference type="NCBI Taxonomy" id="64091"/>
    <lineage>
        <taxon>Archaea</taxon>
        <taxon>Methanobacteriati</taxon>
        <taxon>Methanobacteriota</taxon>
        <taxon>Stenosarchaea group</taxon>
        <taxon>Halobacteria</taxon>
        <taxon>Halobacteriales</taxon>
        <taxon>Halobacteriaceae</taxon>
        <taxon>Halobacterium</taxon>
        <taxon>Halobacterium salinarum NRC-34001</taxon>
    </lineage>
</organism>
<evidence type="ECO:0000255" key="1">
    <source>
        <dbReference type="HAMAP-Rule" id="MF_00250"/>
    </source>
</evidence>
<protein>
    <recommendedName>
        <fullName evidence="1">DNA-directed RNA polymerase subunit Rpo10</fullName>
        <ecNumber evidence="1">2.7.7.6</ecNumber>
    </recommendedName>
    <alternativeName>
        <fullName evidence="1">DNA-directed RNA polymerase subunit N</fullName>
    </alternativeName>
</protein>
<sequence>MMVPVRCFSCGTVVGEHWEAFKARAETHDGDEDPADVLDDLGVDRHCCRRMLIAHQDLVDVVSPYQ</sequence>
<proteinExistence type="inferred from homology"/>
<keyword id="KW-0963">Cytoplasm</keyword>
<keyword id="KW-0240">DNA-directed RNA polymerase</keyword>
<keyword id="KW-0479">Metal-binding</keyword>
<keyword id="KW-0548">Nucleotidyltransferase</keyword>
<keyword id="KW-1185">Reference proteome</keyword>
<keyword id="KW-0804">Transcription</keyword>
<keyword id="KW-0808">Transferase</keyword>
<keyword id="KW-0862">Zinc</keyword>
<gene>
    <name evidence="1" type="primary">rpo10</name>
    <name evidence="1" type="synonym">rpoN</name>
    <name type="ordered locus">VNG_1140G</name>
</gene>
<name>RPO10_HALSA</name>
<feature type="chain" id="PRO_0000121347" description="DNA-directed RNA polymerase subunit Rpo10">
    <location>
        <begin position="1"/>
        <end position="66"/>
    </location>
</feature>
<feature type="binding site" evidence="1">
    <location>
        <position position="7"/>
    </location>
    <ligand>
        <name>Zn(2+)</name>
        <dbReference type="ChEBI" id="CHEBI:29105"/>
    </ligand>
</feature>
<feature type="binding site" evidence="1">
    <location>
        <position position="10"/>
    </location>
    <ligand>
        <name>Zn(2+)</name>
        <dbReference type="ChEBI" id="CHEBI:29105"/>
    </ligand>
</feature>
<feature type="binding site" evidence="1">
    <location>
        <position position="47"/>
    </location>
    <ligand>
        <name>Zn(2+)</name>
        <dbReference type="ChEBI" id="CHEBI:29105"/>
    </ligand>
</feature>
<feature type="binding site" evidence="1">
    <location>
        <position position="48"/>
    </location>
    <ligand>
        <name>Zn(2+)</name>
        <dbReference type="ChEBI" id="CHEBI:29105"/>
    </ligand>
</feature>
<reference key="1">
    <citation type="journal article" date="2000" name="Proc. Natl. Acad. Sci. U.S.A.">
        <title>Genome sequence of Halobacterium species NRC-1.</title>
        <authorList>
            <person name="Ng W.V."/>
            <person name="Kennedy S.P."/>
            <person name="Mahairas G.G."/>
            <person name="Berquist B."/>
            <person name="Pan M."/>
            <person name="Shukla H.D."/>
            <person name="Lasky S.R."/>
            <person name="Baliga N.S."/>
            <person name="Thorsson V."/>
            <person name="Sbrogna J."/>
            <person name="Swartzell S."/>
            <person name="Weir D."/>
            <person name="Hall J."/>
            <person name="Dahl T.A."/>
            <person name="Welti R."/>
            <person name="Goo Y.A."/>
            <person name="Leithauser B."/>
            <person name="Keller K."/>
            <person name="Cruz R."/>
            <person name="Danson M.J."/>
            <person name="Hough D.W."/>
            <person name="Maddocks D.G."/>
            <person name="Jablonski P.E."/>
            <person name="Krebs M.P."/>
            <person name="Angevine C.M."/>
            <person name="Dale H."/>
            <person name="Isenbarger T.A."/>
            <person name="Peck R.F."/>
            <person name="Pohlschroder M."/>
            <person name="Spudich J.L."/>
            <person name="Jung K.-H."/>
            <person name="Alam M."/>
            <person name="Freitas T."/>
            <person name="Hou S."/>
            <person name="Daniels C.J."/>
            <person name="Dennis P.P."/>
            <person name="Omer A.D."/>
            <person name="Ebhardt H."/>
            <person name="Lowe T.M."/>
            <person name="Liang P."/>
            <person name="Riley M."/>
            <person name="Hood L."/>
            <person name="DasSarma S."/>
        </authorList>
    </citation>
    <scope>NUCLEOTIDE SEQUENCE [LARGE SCALE GENOMIC DNA]</scope>
    <source>
        <strain>ATCC 700922 / JCM 11081 / NRC-1</strain>
    </source>
</reference>
<comment type="function">
    <text evidence="1">DNA-dependent RNA polymerase (RNAP) catalyzes the transcription of DNA into RNA using the four ribonucleoside triphosphates as substrates.</text>
</comment>
<comment type="catalytic activity">
    <reaction evidence="1">
        <text>RNA(n) + a ribonucleoside 5'-triphosphate = RNA(n+1) + diphosphate</text>
        <dbReference type="Rhea" id="RHEA:21248"/>
        <dbReference type="Rhea" id="RHEA-COMP:14527"/>
        <dbReference type="Rhea" id="RHEA-COMP:17342"/>
        <dbReference type="ChEBI" id="CHEBI:33019"/>
        <dbReference type="ChEBI" id="CHEBI:61557"/>
        <dbReference type="ChEBI" id="CHEBI:140395"/>
        <dbReference type="EC" id="2.7.7.6"/>
    </reaction>
</comment>
<comment type="cofactor">
    <cofactor evidence="1">
        <name>Zn(2+)</name>
        <dbReference type="ChEBI" id="CHEBI:29105"/>
    </cofactor>
    <text evidence="1">Binds 1 zinc ion.</text>
</comment>
<comment type="subunit">
    <text evidence="1">Part of the RNA polymerase complex.</text>
</comment>
<comment type="subcellular location">
    <subcellularLocation>
        <location evidence="1">Cytoplasm</location>
    </subcellularLocation>
</comment>
<comment type="similarity">
    <text evidence="1">Belongs to the archaeal Rpo10/eukaryotic RPB10 RNA polymerase subunit family.</text>
</comment>
<dbReference type="EC" id="2.7.7.6" evidence="1"/>
<dbReference type="EMBL" id="AE004437">
    <property type="protein sequence ID" value="AAG19524.1"/>
    <property type="molecule type" value="Genomic_DNA"/>
</dbReference>
<dbReference type="PIR" id="H84269">
    <property type="entry name" value="H84269"/>
</dbReference>
<dbReference type="RefSeq" id="WP_010902819.1">
    <property type="nucleotide sequence ID" value="NC_002607.1"/>
</dbReference>
<dbReference type="SMR" id="Q9HQJ1"/>
<dbReference type="FunCoup" id="Q9HQJ1">
    <property type="interactions" value="57"/>
</dbReference>
<dbReference type="STRING" id="64091.VNG_1140G"/>
<dbReference type="PaxDb" id="64091-VNG_1140G"/>
<dbReference type="KEGG" id="hal:VNG_1140G"/>
<dbReference type="PATRIC" id="fig|64091.14.peg.870"/>
<dbReference type="HOGENOM" id="CLU_143122_1_1_2"/>
<dbReference type="InParanoid" id="Q9HQJ1"/>
<dbReference type="OrthoDB" id="371754at2157"/>
<dbReference type="PhylomeDB" id="Q9HQJ1"/>
<dbReference type="Proteomes" id="UP000000554">
    <property type="component" value="Chromosome"/>
</dbReference>
<dbReference type="GO" id="GO:0005737">
    <property type="term" value="C:cytoplasm"/>
    <property type="evidence" value="ECO:0007669"/>
    <property type="project" value="UniProtKB-SubCell"/>
</dbReference>
<dbReference type="GO" id="GO:0000428">
    <property type="term" value="C:DNA-directed RNA polymerase complex"/>
    <property type="evidence" value="ECO:0007669"/>
    <property type="project" value="UniProtKB-KW"/>
</dbReference>
<dbReference type="GO" id="GO:0003677">
    <property type="term" value="F:DNA binding"/>
    <property type="evidence" value="ECO:0007669"/>
    <property type="project" value="InterPro"/>
</dbReference>
<dbReference type="GO" id="GO:0003899">
    <property type="term" value="F:DNA-directed RNA polymerase activity"/>
    <property type="evidence" value="ECO:0007669"/>
    <property type="project" value="UniProtKB-UniRule"/>
</dbReference>
<dbReference type="GO" id="GO:0008270">
    <property type="term" value="F:zinc ion binding"/>
    <property type="evidence" value="ECO:0000318"/>
    <property type="project" value="GO_Central"/>
</dbReference>
<dbReference type="GO" id="GO:0006351">
    <property type="term" value="P:DNA-templated transcription"/>
    <property type="evidence" value="ECO:0007669"/>
    <property type="project" value="UniProtKB-UniRule"/>
</dbReference>
<dbReference type="FunFam" id="1.10.10.60:FF:000335">
    <property type="entry name" value="DNA-directed RNA polymerase subunit N, putative"/>
    <property type="match status" value="1"/>
</dbReference>
<dbReference type="Gene3D" id="1.10.10.60">
    <property type="entry name" value="Homeodomain-like"/>
    <property type="match status" value="1"/>
</dbReference>
<dbReference type="HAMAP" id="MF_00250">
    <property type="entry name" value="RNApol_arch_Rpo10"/>
    <property type="match status" value="1"/>
</dbReference>
<dbReference type="InterPro" id="IPR023580">
    <property type="entry name" value="RNA_pol_su_RPB10"/>
</dbReference>
<dbReference type="InterPro" id="IPR020789">
    <property type="entry name" value="RNA_pol_suN_Zn-BS"/>
</dbReference>
<dbReference type="InterPro" id="IPR000268">
    <property type="entry name" value="RPABC5/Rpb10"/>
</dbReference>
<dbReference type="NCBIfam" id="NF003089">
    <property type="entry name" value="PRK04016.1"/>
    <property type="match status" value="1"/>
</dbReference>
<dbReference type="PANTHER" id="PTHR23431:SF3">
    <property type="entry name" value="DNA-DIRECTED RNA POLYMERASES I, II, AND III SUBUNIT RPABC5"/>
    <property type="match status" value="1"/>
</dbReference>
<dbReference type="PANTHER" id="PTHR23431">
    <property type="entry name" value="DNA-DIRECTED RNA POLYMERASES I, II, AND III SUBUNIT RPABC5 FAMILY MEMBER"/>
    <property type="match status" value="1"/>
</dbReference>
<dbReference type="Pfam" id="PF01194">
    <property type="entry name" value="RNA_pol_N"/>
    <property type="match status" value="1"/>
</dbReference>
<dbReference type="PIRSF" id="PIRSF005653">
    <property type="entry name" value="RNA_pol_N/8_sub"/>
    <property type="match status" value="1"/>
</dbReference>
<dbReference type="SUPFAM" id="SSF46924">
    <property type="entry name" value="RNA polymerase subunit RPB10"/>
    <property type="match status" value="1"/>
</dbReference>
<dbReference type="PROSITE" id="PS01112">
    <property type="entry name" value="RNA_POL_N_8KD"/>
    <property type="match status" value="1"/>
</dbReference>